<organism>
    <name type="scientific">Parvibaculum lavamentivorans (strain DS-1 / DSM 13023 / NCIMB 13966)</name>
    <dbReference type="NCBI Taxonomy" id="402881"/>
    <lineage>
        <taxon>Bacteria</taxon>
        <taxon>Pseudomonadati</taxon>
        <taxon>Pseudomonadota</taxon>
        <taxon>Alphaproteobacteria</taxon>
        <taxon>Hyphomicrobiales</taxon>
        <taxon>Parvibaculaceae</taxon>
        <taxon>Parvibaculum</taxon>
    </lineage>
</organism>
<keyword id="KW-0066">ATP synthesis</keyword>
<keyword id="KW-0997">Cell inner membrane</keyword>
<keyword id="KW-1003">Cell membrane</keyword>
<keyword id="KW-0138">CF(0)</keyword>
<keyword id="KW-0375">Hydrogen ion transport</keyword>
<keyword id="KW-0406">Ion transport</keyword>
<keyword id="KW-0472">Membrane</keyword>
<keyword id="KW-1185">Reference proteome</keyword>
<keyword id="KW-0812">Transmembrane</keyword>
<keyword id="KW-1133">Transmembrane helix</keyword>
<keyword id="KW-0813">Transport</keyword>
<sequence length="161" mass="17904">MFATAEFWILACLVAFFAILGYFKVHRTLAATLDKRAADIAAELDEARRLREEAQQLLASYQRKQREAMKEAEDIVAQAKVEAEQLAKETRANMEIQVERRTKLAEDKIAQAETQALNDVRATAAEVAVGAARRVIAAKVDAGKDAEFVEKSISELTSKLH</sequence>
<dbReference type="EMBL" id="CP000774">
    <property type="protein sequence ID" value="ABS62317.1"/>
    <property type="molecule type" value="Genomic_DNA"/>
</dbReference>
<dbReference type="RefSeq" id="WP_011995608.1">
    <property type="nucleotide sequence ID" value="NC_009719.1"/>
</dbReference>
<dbReference type="SMR" id="A7HQY4"/>
<dbReference type="STRING" id="402881.Plav_0694"/>
<dbReference type="KEGG" id="pla:Plav_0694"/>
<dbReference type="eggNOG" id="COG0711">
    <property type="taxonomic scope" value="Bacteria"/>
</dbReference>
<dbReference type="HOGENOM" id="CLU_079215_6_1_5"/>
<dbReference type="OrthoDB" id="8479836at2"/>
<dbReference type="Proteomes" id="UP000006377">
    <property type="component" value="Chromosome"/>
</dbReference>
<dbReference type="GO" id="GO:0005886">
    <property type="term" value="C:plasma membrane"/>
    <property type="evidence" value="ECO:0007669"/>
    <property type="project" value="UniProtKB-SubCell"/>
</dbReference>
<dbReference type="GO" id="GO:0045259">
    <property type="term" value="C:proton-transporting ATP synthase complex"/>
    <property type="evidence" value="ECO:0007669"/>
    <property type="project" value="UniProtKB-KW"/>
</dbReference>
<dbReference type="GO" id="GO:0046933">
    <property type="term" value="F:proton-transporting ATP synthase activity, rotational mechanism"/>
    <property type="evidence" value="ECO:0007669"/>
    <property type="project" value="UniProtKB-UniRule"/>
</dbReference>
<dbReference type="GO" id="GO:0046961">
    <property type="term" value="F:proton-transporting ATPase activity, rotational mechanism"/>
    <property type="evidence" value="ECO:0007669"/>
    <property type="project" value="TreeGrafter"/>
</dbReference>
<dbReference type="CDD" id="cd06503">
    <property type="entry name" value="ATP-synt_Fo_b"/>
    <property type="match status" value="1"/>
</dbReference>
<dbReference type="HAMAP" id="MF_01398">
    <property type="entry name" value="ATP_synth_b_bprime"/>
    <property type="match status" value="1"/>
</dbReference>
<dbReference type="InterPro" id="IPR002146">
    <property type="entry name" value="ATP_synth_b/b'su_bac/chlpt"/>
</dbReference>
<dbReference type="InterPro" id="IPR050059">
    <property type="entry name" value="ATP_synthase_B_chain"/>
</dbReference>
<dbReference type="PANTHER" id="PTHR33445:SF1">
    <property type="entry name" value="ATP SYNTHASE SUBUNIT B"/>
    <property type="match status" value="1"/>
</dbReference>
<dbReference type="PANTHER" id="PTHR33445">
    <property type="entry name" value="ATP SYNTHASE SUBUNIT B', CHLOROPLASTIC"/>
    <property type="match status" value="1"/>
</dbReference>
<dbReference type="Pfam" id="PF00430">
    <property type="entry name" value="ATP-synt_B"/>
    <property type="match status" value="1"/>
</dbReference>
<accession>A7HQY4</accession>
<reference key="1">
    <citation type="journal article" date="2011" name="Stand. Genomic Sci.">
        <title>Complete genome sequence of Parvibaculum lavamentivorans type strain (DS-1(T)).</title>
        <authorList>
            <person name="Schleheck D."/>
            <person name="Weiss M."/>
            <person name="Pitluck S."/>
            <person name="Bruce D."/>
            <person name="Land M.L."/>
            <person name="Han S."/>
            <person name="Saunders E."/>
            <person name="Tapia R."/>
            <person name="Detter C."/>
            <person name="Brettin T."/>
            <person name="Han J."/>
            <person name="Woyke T."/>
            <person name="Goodwin L."/>
            <person name="Pennacchio L."/>
            <person name="Nolan M."/>
            <person name="Cook A.M."/>
            <person name="Kjelleberg S."/>
            <person name="Thomas T."/>
        </authorList>
    </citation>
    <scope>NUCLEOTIDE SEQUENCE [LARGE SCALE GENOMIC DNA]</scope>
    <source>
        <strain>DS-1 / DSM 13023 / NCIMB 13966</strain>
    </source>
</reference>
<comment type="function">
    <text evidence="1">F(1)F(0) ATP synthase produces ATP from ADP in the presence of a proton or sodium gradient. F-type ATPases consist of two structural domains, F(1) containing the extramembraneous catalytic core and F(0) containing the membrane proton channel, linked together by a central stalk and a peripheral stalk. During catalysis, ATP synthesis in the catalytic domain of F(1) is coupled via a rotary mechanism of the central stalk subunits to proton translocation.</text>
</comment>
<comment type="function">
    <text evidence="1">Component of the F(0) channel, it forms part of the peripheral stalk, linking F(1) to F(0).</text>
</comment>
<comment type="subunit">
    <text evidence="1">F-type ATPases have 2 components, F(1) - the catalytic core - and F(0) - the membrane proton channel. F(1) has five subunits: alpha(3), beta(3), gamma(1), delta(1), epsilon(1). F(0) has three main subunits: a(1), b(2) and c(10-14). The alpha and beta chains form an alternating ring which encloses part of the gamma chain. F(1) is attached to F(0) by a central stalk formed by the gamma and epsilon chains, while a peripheral stalk is formed by the delta and b chains.</text>
</comment>
<comment type="subcellular location">
    <subcellularLocation>
        <location evidence="1">Cell inner membrane</location>
        <topology evidence="1">Single-pass membrane protein</topology>
    </subcellularLocation>
</comment>
<comment type="similarity">
    <text evidence="1">Belongs to the ATPase B chain family.</text>
</comment>
<proteinExistence type="inferred from homology"/>
<name>ATPF1_PARL1</name>
<evidence type="ECO:0000255" key="1">
    <source>
        <dbReference type="HAMAP-Rule" id="MF_01398"/>
    </source>
</evidence>
<protein>
    <recommendedName>
        <fullName evidence="1">ATP synthase subunit b 1</fullName>
    </recommendedName>
    <alternativeName>
        <fullName evidence="1">ATP synthase F(0) sector subunit b 1</fullName>
    </alternativeName>
    <alternativeName>
        <fullName evidence="1">ATPase subunit I 1</fullName>
    </alternativeName>
    <alternativeName>
        <fullName evidence="1">F-type ATPase subunit b 1</fullName>
        <shortName evidence="1">F-ATPase subunit b 1</shortName>
    </alternativeName>
</protein>
<gene>
    <name evidence="1" type="primary">atpF1</name>
    <name type="ordered locus">Plav_0694</name>
</gene>
<feature type="chain" id="PRO_0000368643" description="ATP synthase subunit b 1">
    <location>
        <begin position="1"/>
        <end position="161"/>
    </location>
</feature>
<feature type="transmembrane region" description="Helical" evidence="1">
    <location>
        <begin position="1"/>
        <end position="21"/>
    </location>
</feature>